<proteinExistence type="inferred from homology"/>
<evidence type="ECO:0000255" key="1">
    <source>
        <dbReference type="HAMAP-Rule" id="MF_00627"/>
    </source>
</evidence>
<reference key="1">
    <citation type="journal article" date="2011" name="Proc. Natl. Acad. Sci. U.S.A.">
        <title>Genomic anatomy of Escherichia coli O157:H7 outbreaks.</title>
        <authorList>
            <person name="Eppinger M."/>
            <person name="Mammel M.K."/>
            <person name="Leclerc J.E."/>
            <person name="Ravel J."/>
            <person name="Cebula T.A."/>
        </authorList>
    </citation>
    <scope>NUCLEOTIDE SEQUENCE [LARGE SCALE GENOMIC DNA]</scope>
    <source>
        <strain>EC4115 / EHEC</strain>
    </source>
</reference>
<sequence length="341" mass="37202">MKALSKLKAEEGIWMTDVPVPELGHNDLLIKIRKTAICGTDVHIYNWDEWSQKTIPVPMVVGHEYVGEVVGIGQEVKGFKIGDRVSGEGHITCGHCRNCRGGRTHLCRNTIGVGVNRPGCFAEYLVIPAFNAFKIPDNISDDLASIFDPFGNAVHTALSFDLVGEDVLVSGAGPIGIMAAAVAKHVGARNVVITDVNEYRLELARKMGITRAVNVAKENLNDVMAELGMTEGFDVGLEMSGAPPAFRTMLDTMNHGGRIAMLGIPPSDMSIDWTKVIFKGLFIKGIYGREMFETWYKMAALIQSGLDLSPIITHRFSIDDFQKGFDAMCSGQSGKVILSWD</sequence>
<accession>B5YWB7</accession>
<protein>
    <recommendedName>
        <fullName evidence="1">L-threonine 3-dehydrogenase</fullName>
        <shortName evidence="1">TDH</shortName>
        <ecNumber evidence="1">1.1.1.103</ecNumber>
    </recommendedName>
</protein>
<name>TDH_ECO5E</name>
<organism>
    <name type="scientific">Escherichia coli O157:H7 (strain EC4115 / EHEC)</name>
    <dbReference type="NCBI Taxonomy" id="444450"/>
    <lineage>
        <taxon>Bacteria</taxon>
        <taxon>Pseudomonadati</taxon>
        <taxon>Pseudomonadota</taxon>
        <taxon>Gammaproteobacteria</taxon>
        <taxon>Enterobacterales</taxon>
        <taxon>Enterobacteriaceae</taxon>
        <taxon>Escherichia</taxon>
    </lineage>
</organism>
<dbReference type="EC" id="1.1.1.103" evidence="1"/>
<dbReference type="EMBL" id="CP001164">
    <property type="protein sequence ID" value="ACI38839.1"/>
    <property type="molecule type" value="Genomic_DNA"/>
</dbReference>
<dbReference type="RefSeq" id="WP_000646013.1">
    <property type="nucleotide sequence ID" value="NC_011353.1"/>
</dbReference>
<dbReference type="SMR" id="B5YWB7"/>
<dbReference type="KEGG" id="ecf:ECH74115_4989"/>
<dbReference type="HOGENOM" id="CLU_026673_11_0_6"/>
<dbReference type="UniPathway" id="UPA00046">
    <property type="reaction ID" value="UER00505"/>
</dbReference>
<dbReference type="GO" id="GO:0005737">
    <property type="term" value="C:cytoplasm"/>
    <property type="evidence" value="ECO:0007669"/>
    <property type="project" value="UniProtKB-SubCell"/>
</dbReference>
<dbReference type="GO" id="GO:0008743">
    <property type="term" value="F:L-threonine 3-dehydrogenase activity"/>
    <property type="evidence" value="ECO:0007669"/>
    <property type="project" value="UniProtKB-UniRule"/>
</dbReference>
<dbReference type="GO" id="GO:0008270">
    <property type="term" value="F:zinc ion binding"/>
    <property type="evidence" value="ECO:0007669"/>
    <property type="project" value="UniProtKB-UniRule"/>
</dbReference>
<dbReference type="GO" id="GO:0019518">
    <property type="term" value="P:L-threonine catabolic process to glycine"/>
    <property type="evidence" value="ECO:0007669"/>
    <property type="project" value="UniProtKB-UniPathway"/>
</dbReference>
<dbReference type="FunFam" id="3.40.50.720:FF:000059">
    <property type="entry name" value="L-threonine 3-dehydrogenase"/>
    <property type="match status" value="1"/>
</dbReference>
<dbReference type="Gene3D" id="3.90.180.10">
    <property type="entry name" value="Medium-chain alcohol dehydrogenases, catalytic domain"/>
    <property type="match status" value="1"/>
</dbReference>
<dbReference type="Gene3D" id="3.40.50.720">
    <property type="entry name" value="NAD(P)-binding Rossmann-like Domain"/>
    <property type="match status" value="1"/>
</dbReference>
<dbReference type="HAMAP" id="MF_00627">
    <property type="entry name" value="Thr_dehydrog"/>
    <property type="match status" value="1"/>
</dbReference>
<dbReference type="InterPro" id="IPR013149">
    <property type="entry name" value="ADH-like_C"/>
</dbReference>
<dbReference type="InterPro" id="IPR013154">
    <property type="entry name" value="ADH-like_N"/>
</dbReference>
<dbReference type="InterPro" id="IPR002328">
    <property type="entry name" value="ADH_Zn_CS"/>
</dbReference>
<dbReference type="InterPro" id="IPR011032">
    <property type="entry name" value="GroES-like_sf"/>
</dbReference>
<dbReference type="InterPro" id="IPR004627">
    <property type="entry name" value="L-Threonine_3-DHase"/>
</dbReference>
<dbReference type="InterPro" id="IPR036291">
    <property type="entry name" value="NAD(P)-bd_dom_sf"/>
</dbReference>
<dbReference type="InterPro" id="IPR020843">
    <property type="entry name" value="PKS_ER"/>
</dbReference>
<dbReference type="InterPro" id="IPR050129">
    <property type="entry name" value="Zn_alcohol_dh"/>
</dbReference>
<dbReference type="NCBIfam" id="NF003808">
    <property type="entry name" value="PRK05396.1"/>
    <property type="match status" value="1"/>
</dbReference>
<dbReference type="NCBIfam" id="TIGR00692">
    <property type="entry name" value="tdh"/>
    <property type="match status" value="1"/>
</dbReference>
<dbReference type="PANTHER" id="PTHR43401">
    <property type="entry name" value="L-THREONINE 3-DEHYDROGENASE"/>
    <property type="match status" value="1"/>
</dbReference>
<dbReference type="PANTHER" id="PTHR43401:SF2">
    <property type="entry name" value="L-THREONINE 3-DEHYDROGENASE"/>
    <property type="match status" value="1"/>
</dbReference>
<dbReference type="Pfam" id="PF08240">
    <property type="entry name" value="ADH_N"/>
    <property type="match status" value="1"/>
</dbReference>
<dbReference type="Pfam" id="PF00107">
    <property type="entry name" value="ADH_zinc_N"/>
    <property type="match status" value="1"/>
</dbReference>
<dbReference type="SMART" id="SM00829">
    <property type="entry name" value="PKS_ER"/>
    <property type="match status" value="1"/>
</dbReference>
<dbReference type="SUPFAM" id="SSF50129">
    <property type="entry name" value="GroES-like"/>
    <property type="match status" value="1"/>
</dbReference>
<dbReference type="SUPFAM" id="SSF51735">
    <property type="entry name" value="NAD(P)-binding Rossmann-fold domains"/>
    <property type="match status" value="1"/>
</dbReference>
<dbReference type="PROSITE" id="PS00059">
    <property type="entry name" value="ADH_ZINC"/>
    <property type="match status" value="1"/>
</dbReference>
<comment type="function">
    <text evidence="1">Catalyzes the NAD(+)-dependent oxidation of L-threonine to 2-amino-3-ketobutyrate.</text>
</comment>
<comment type="catalytic activity">
    <reaction evidence="1">
        <text>L-threonine + NAD(+) = (2S)-2-amino-3-oxobutanoate + NADH + H(+)</text>
        <dbReference type="Rhea" id="RHEA:13161"/>
        <dbReference type="ChEBI" id="CHEBI:15378"/>
        <dbReference type="ChEBI" id="CHEBI:57540"/>
        <dbReference type="ChEBI" id="CHEBI:57926"/>
        <dbReference type="ChEBI" id="CHEBI:57945"/>
        <dbReference type="ChEBI" id="CHEBI:78948"/>
        <dbReference type="EC" id="1.1.1.103"/>
    </reaction>
</comment>
<comment type="cofactor">
    <cofactor evidence="1">
        <name>Zn(2+)</name>
        <dbReference type="ChEBI" id="CHEBI:29105"/>
    </cofactor>
    <text evidence="1">Binds 2 Zn(2+) ions per subunit.</text>
</comment>
<comment type="pathway">
    <text evidence="1">Amino-acid degradation; L-threonine degradation via oxydo-reductase pathway; glycine from L-threonine: step 1/2.</text>
</comment>
<comment type="subunit">
    <text evidence="1">Homotetramer.</text>
</comment>
<comment type="subcellular location">
    <subcellularLocation>
        <location evidence="1">Cytoplasm</location>
    </subcellularLocation>
</comment>
<comment type="similarity">
    <text evidence="1">Belongs to the zinc-containing alcohol dehydrogenase family.</text>
</comment>
<keyword id="KW-0963">Cytoplasm</keyword>
<keyword id="KW-0479">Metal-binding</keyword>
<keyword id="KW-0520">NAD</keyword>
<keyword id="KW-0560">Oxidoreductase</keyword>
<keyword id="KW-0862">Zinc</keyword>
<feature type="chain" id="PRO_1000130545" description="L-threonine 3-dehydrogenase">
    <location>
        <begin position="1"/>
        <end position="341"/>
    </location>
</feature>
<feature type="active site" description="Charge relay system" evidence="1">
    <location>
        <position position="40"/>
    </location>
</feature>
<feature type="active site" description="Charge relay system" evidence="1">
    <location>
        <position position="43"/>
    </location>
</feature>
<feature type="binding site" evidence="1">
    <location>
        <position position="38"/>
    </location>
    <ligand>
        <name>Zn(2+)</name>
        <dbReference type="ChEBI" id="CHEBI:29105"/>
        <label>1</label>
        <note>catalytic</note>
    </ligand>
</feature>
<feature type="binding site" evidence="1">
    <location>
        <position position="63"/>
    </location>
    <ligand>
        <name>Zn(2+)</name>
        <dbReference type="ChEBI" id="CHEBI:29105"/>
        <label>1</label>
        <note>catalytic</note>
    </ligand>
</feature>
<feature type="binding site" evidence="1">
    <location>
        <position position="64"/>
    </location>
    <ligand>
        <name>Zn(2+)</name>
        <dbReference type="ChEBI" id="CHEBI:29105"/>
        <label>1</label>
        <note>catalytic</note>
    </ligand>
</feature>
<feature type="binding site" evidence="1">
    <location>
        <position position="93"/>
    </location>
    <ligand>
        <name>Zn(2+)</name>
        <dbReference type="ChEBI" id="CHEBI:29105"/>
        <label>2</label>
    </ligand>
</feature>
<feature type="binding site" evidence="1">
    <location>
        <position position="96"/>
    </location>
    <ligand>
        <name>Zn(2+)</name>
        <dbReference type="ChEBI" id="CHEBI:29105"/>
        <label>2</label>
    </ligand>
</feature>
<feature type="binding site" evidence="1">
    <location>
        <position position="99"/>
    </location>
    <ligand>
        <name>Zn(2+)</name>
        <dbReference type="ChEBI" id="CHEBI:29105"/>
        <label>2</label>
    </ligand>
</feature>
<feature type="binding site" evidence="1">
    <location>
        <position position="107"/>
    </location>
    <ligand>
        <name>Zn(2+)</name>
        <dbReference type="ChEBI" id="CHEBI:29105"/>
        <label>2</label>
    </ligand>
</feature>
<feature type="binding site" evidence="1">
    <location>
        <position position="175"/>
    </location>
    <ligand>
        <name>NAD(+)</name>
        <dbReference type="ChEBI" id="CHEBI:57540"/>
    </ligand>
</feature>
<feature type="binding site" evidence="1">
    <location>
        <position position="195"/>
    </location>
    <ligand>
        <name>NAD(+)</name>
        <dbReference type="ChEBI" id="CHEBI:57540"/>
    </ligand>
</feature>
<feature type="binding site" evidence="1">
    <location>
        <position position="200"/>
    </location>
    <ligand>
        <name>NAD(+)</name>
        <dbReference type="ChEBI" id="CHEBI:57540"/>
    </ligand>
</feature>
<feature type="binding site" evidence="1">
    <location>
        <begin position="262"/>
        <end position="264"/>
    </location>
    <ligand>
        <name>NAD(+)</name>
        <dbReference type="ChEBI" id="CHEBI:57540"/>
    </ligand>
</feature>
<feature type="binding site" evidence="1">
    <location>
        <begin position="286"/>
        <end position="287"/>
    </location>
    <ligand>
        <name>NAD(+)</name>
        <dbReference type="ChEBI" id="CHEBI:57540"/>
    </ligand>
</feature>
<feature type="site" description="Important for catalytic activity for the proton relay mechanism but does not participate directly in the coordination of zinc atom" evidence="1">
    <location>
        <position position="148"/>
    </location>
</feature>
<gene>
    <name evidence="1" type="primary">tdh</name>
    <name type="ordered locus">ECH74115_4989</name>
</gene>